<geneLocation type="chloroplast"/>
<organism>
    <name type="scientific">Brachypodium distachyon</name>
    <name type="common">Purple false brome</name>
    <name type="synonym">Trachynia distachya</name>
    <dbReference type="NCBI Taxonomy" id="15368"/>
    <lineage>
        <taxon>Eukaryota</taxon>
        <taxon>Viridiplantae</taxon>
        <taxon>Streptophyta</taxon>
        <taxon>Embryophyta</taxon>
        <taxon>Tracheophyta</taxon>
        <taxon>Spermatophyta</taxon>
        <taxon>Magnoliopsida</taxon>
        <taxon>Liliopsida</taxon>
        <taxon>Poales</taxon>
        <taxon>Poaceae</taxon>
        <taxon>BOP clade</taxon>
        <taxon>Pooideae</taxon>
        <taxon>Stipodae</taxon>
        <taxon>Brachypodieae</taxon>
        <taxon>Brachypodium</taxon>
    </lineage>
</organism>
<name>PSBN_BRADI</name>
<sequence>METATLVAISISGLLVSFTGYALYTAFGQPSQQLRDPFEEHGD</sequence>
<reference key="1">
    <citation type="journal article" date="2008" name="BMC Res. Notes">
        <title>The complete chloroplast genome sequence of Brachypodium distachyon: sequence comparison and phylogenetic analysis of eight grass plastomes.</title>
        <authorList>
            <person name="Bortiri E."/>
            <person name="Coleman-Derr D."/>
            <person name="Lazo G.R."/>
            <person name="Anderson O.D."/>
            <person name="Gu Y.Q."/>
        </authorList>
    </citation>
    <scope>NUCLEOTIDE SEQUENCE [LARGE SCALE GENOMIC DNA]</scope>
    <source>
        <strain>cv. Bd21</strain>
    </source>
</reference>
<comment type="function">
    <text evidence="1">May play a role in photosystem I and II biogenesis.</text>
</comment>
<comment type="subcellular location">
    <subcellularLocation>
        <location evidence="1">Plastid</location>
        <location evidence="1">Chloroplast thylakoid membrane</location>
        <topology evidence="1">Single-pass membrane protein</topology>
    </subcellularLocation>
</comment>
<comment type="similarity">
    <text evidence="1">Belongs to the PsbN family.</text>
</comment>
<comment type="caution">
    <text evidence="1">Originally thought to be a component of PSII; based on experiments in Synechocystis, N.tabacum and barley, and its absence from PSII in T.elongatus and T.vulcanus, this is probably not true.</text>
</comment>
<dbReference type="EMBL" id="EU325680">
    <property type="protein sequence ID" value="ACF08665.1"/>
    <property type="molecule type" value="Genomic_DNA"/>
</dbReference>
<dbReference type="RefSeq" id="YP_002000513.1">
    <property type="nucleotide sequence ID" value="NC_011032.1"/>
</dbReference>
<dbReference type="SMR" id="B3TN77"/>
<dbReference type="FunCoup" id="B3TN77">
    <property type="interactions" value="78"/>
</dbReference>
<dbReference type="STRING" id="15368.B3TN77"/>
<dbReference type="EnsemblPlants" id="KQK02775">
    <property type="protein sequence ID" value="KQK02775"/>
    <property type="gene ID" value="BRADI_2g03624v3"/>
</dbReference>
<dbReference type="GeneID" id="6439860"/>
<dbReference type="Gramene" id="KQK02775">
    <property type="protein sequence ID" value="KQK02775"/>
    <property type="gene ID" value="BRADI_2g03624v3"/>
</dbReference>
<dbReference type="KEGG" id="bdi:6439860"/>
<dbReference type="InParanoid" id="B3TN77"/>
<dbReference type="OrthoDB" id="1860403at2759"/>
<dbReference type="Proteomes" id="UP000008810">
    <property type="component" value="Unplaced"/>
</dbReference>
<dbReference type="GO" id="GO:0009535">
    <property type="term" value="C:chloroplast thylakoid membrane"/>
    <property type="evidence" value="ECO:0007669"/>
    <property type="project" value="UniProtKB-SubCell"/>
</dbReference>
<dbReference type="GO" id="GO:0015979">
    <property type="term" value="P:photosynthesis"/>
    <property type="evidence" value="ECO:0007669"/>
    <property type="project" value="InterPro"/>
</dbReference>
<dbReference type="HAMAP" id="MF_00293">
    <property type="entry name" value="PSII_PsbN"/>
    <property type="match status" value="1"/>
</dbReference>
<dbReference type="InterPro" id="IPR003398">
    <property type="entry name" value="PSII_PsbN"/>
</dbReference>
<dbReference type="PANTHER" id="PTHR35326">
    <property type="entry name" value="PROTEIN PSBN"/>
    <property type="match status" value="1"/>
</dbReference>
<dbReference type="PANTHER" id="PTHR35326:SF3">
    <property type="entry name" value="PROTEIN PSBN"/>
    <property type="match status" value="1"/>
</dbReference>
<dbReference type="Pfam" id="PF02468">
    <property type="entry name" value="PsbN"/>
    <property type="match status" value="1"/>
</dbReference>
<protein>
    <recommendedName>
        <fullName evidence="1">Protein PsbN</fullName>
    </recommendedName>
</protein>
<gene>
    <name evidence="1" type="primary">psbN</name>
</gene>
<feature type="chain" id="PRO_0000362178" description="Protein PsbN">
    <location>
        <begin position="1"/>
        <end position="43"/>
    </location>
</feature>
<feature type="transmembrane region" description="Helical" evidence="1">
    <location>
        <begin position="5"/>
        <end position="27"/>
    </location>
</feature>
<keyword id="KW-0150">Chloroplast</keyword>
<keyword id="KW-0472">Membrane</keyword>
<keyword id="KW-0934">Plastid</keyword>
<keyword id="KW-1185">Reference proteome</keyword>
<keyword id="KW-0793">Thylakoid</keyword>
<keyword id="KW-0812">Transmembrane</keyword>
<keyword id="KW-1133">Transmembrane helix</keyword>
<proteinExistence type="inferred from homology"/>
<evidence type="ECO:0000255" key="1">
    <source>
        <dbReference type="HAMAP-Rule" id="MF_00293"/>
    </source>
</evidence>
<accession>B3TN77</accession>